<keyword id="KW-0067">ATP-binding</keyword>
<keyword id="KW-0317">Glutathione biosynthesis</keyword>
<keyword id="KW-0436">Ligase</keyword>
<keyword id="KW-0460">Magnesium</keyword>
<keyword id="KW-0464">Manganese</keyword>
<keyword id="KW-0479">Metal-binding</keyword>
<keyword id="KW-0547">Nucleotide-binding</keyword>
<keyword id="KW-1185">Reference proteome</keyword>
<name>GSHB_SYNY3</name>
<gene>
    <name evidence="2" type="primary">gshB</name>
    <name type="ordered locus">slr1238</name>
</gene>
<proteinExistence type="inferred from homology"/>
<evidence type="ECO:0000250" key="1"/>
<evidence type="ECO:0000255" key="2">
    <source>
        <dbReference type="HAMAP-Rule" id="MF_00162"/>
    </source>
</evidence>
<organism>
    <name type="scientific">Synechocystis sp. (strain ATCC 27184 / PCC 6803 / Kazusa)</name>
    <dbReference type="NCBI Taxonomy" id="1111708"/>
    <lineage>
        <taxon>Bacteria</taxon>
        <taxon>Bacillati</taxon>
        <taxon>Cyanobacteriota</taxon>
        <taxon>Cyanophyceae</taxon>
        <taxon>Synechococcales</taxon>
        <taxon>Merismopediaceae</taxon>
        <taxon>Synechocystis</taxon>
    </lineage>
</organism>
<feature type="chain" id="PRO_0000197490" description="Glutathione synthetase">
    <location>
        <begin position="1"/>
        <end position="320"/>
    </location>
</feature>
<feature type="domain" description="ATP-grasp" evidence="2">
    <location>
        <begin position="133"/>
        <end position="317"/>
    </location>
</feature>
<feature type="binding site" evidence="2">
    <location>
        <begin position="159"/>
        <end position="215"/>
    </location>
    <ligand>
        <name>ATP</name>
        <dbReference type="ChEBI" id="CHEBI:30616"/>
    </ligand>
</feature>
<feature type="binding site" evidence="2">
    <location>
        <position position="288"/>
    </location>
    <ligand>
        <name>Mg(2+)</name>
        <dbReference type="ChEBI" id="CHEBI:18420"/>
    </ligand>
</feature>
<feature type="binding site" evidence="2">
    <location>
        <position position="290"/>
    </location>
    <ligand>
        <name>Mg(2+)</name>
        <dbReference type="ChEBI" id="CHEBI:18420"/>
    </ligand>
</feature>
<comment type="catalytic activity">
    <reaction evidence="2">
        <text>gamma-L-glutamyl-L-cysteine + glycine + ATP = glutathione + ADP + phosphate + H(+)</text>
        <dbReference type="Rhea" id="RHEA:13557"/>
        <dbReference type="ChEBI" id="CHEBI:15378"/>
        <dbReference type="ChEBI" id="CHEBI:30616"/>
        <dbReference type="ChEBI" id="CHEBI:43474"/>
        <dbReference type="ChEBI" id="CHEBI:57305"/>
        <dbReference type="ChEBI" id="CHEBI:57925"/>
        <dbReference type="ChEBI" id="CHEBI:58173"/>
        <dbReference type="ChEBI" id="CHEBI:456216"/>
        <dbReference type="EC" id="6.3.2.3"/>
    </reaction>
</comment>
<comment type="cofactor">
    <cofactor evidence="1">
        <name>Mg(2+)</name>
        <dbReference type="ChEBI" id="CHEBI:18420"/>
    </cofactor>
    <cofactor evidence="1">
        <name>Mn(2+)</name>
        <dbReference type="ChEBI" id="CHEBI:29035"/>
    </cofactor>
    <text evidence="1">Binds 1 Mg(2+) or Mn(2+) ion per subunit.</text>
</comment>
<comment type="pathway">
    <text evidence="2">Sulfur metabolism; glutathione biosynthesis; glutathione from L-cysteine and L-glutamate: step 2/2.</text>
</comment>
<comment type="similarity">
    <text evidence="2">Belongs to the prokaryotic GSH synthase family.</text>
</comment>
<accession>P73493</accession>
<reference key="1">
    <citation type="journal article" date="1996" name="DNA Res.">
        <title>Sequence analysis of the genome of the unicellular cyanobacterium Synechocystis sp. strain PCC6803. II. Sequence determination of the entire genome and assignment of potential protein-coding regions.</title>
        <authorList>
            <person name="Kaneko T."/>
            <person name="Sato S."/>
            <person name="Kotani H."/>
            <person name="Tanaka A."/>
            <person name="Asamizu E."/>
            <person name="Nakamura Y."/>
            <person name="Miyajima N."/>
            <person name="Hirosawa M."/>
            <person name="Sugiura M."/>
            <person name="Sasamoto S."/>
            <person name="Kimura T."/>
            <person name="Hosouchi T."/>
            <person name="Matsuno A."/>
            <person name="Muraki A."/>
            <person name="Nakazaki N."/>
            <person name="Naruo K."/>
            <person name="Okumura S."/>
            <person name="Shimpo S."/>
            <person name="Takeuchi C."/>
            <person name="Wada T."/>
            <person name="Watanabe A."/>
            <person name="Yamada M."/>
            <person name="Yasuda M."/>
            <person name="Tabata S."/>
        </authorList>
    </citation>
    <scope>NUCLEOTIDE SEQUENCE [LARGE SCALE GENOMIC DNA]</scope>
    <source>
        <strain>ATCC 27184 / PCC 6803 / Kazusa</strain>
    </source>
</reference>
<protein>
    <recommendedName>
        <fullName evidence="2">Glutathione synthetase</fullName>
        <ecNumber evidence="2">6.3.2.3</ecNumber>
    </recommendedName>
    <alternativeName>
        <fullName evidence="2">GSH synthetase</fullName>
        <shortName evidence="2">GSH-S</shortName>
        <shortName evidence="2">GSHase</shortName>
    </alternativeName>
    <alternativeName>
        <fullName evidence="2">Glutathione synthase</fullName>
    </alternativeName>
</protein>
<dbReference type="EC" id="6.3.2.3" evidence="2"/>
<dbReference type="EMBL" id="BA000022">
    <property type="protein sequence ID" value="BAA17533.1"/>
    <property type="molecule type" value="Genomic_DNA"/>
</dbReference>
<dbReference type="PIR" id="S77430">
    <property type="entry name" value="S77430"/>
</dbReference>
<dbReference type="SMR" id="P73493"/>
<dbReference type="IntAct" id="P73493">
    <property type="interactions" value="1"/>
</dbReference>
<dbReference type="STRING" id="1148.gene:10498398"/>
<dbReference type="PaxDb" id="1148-1652612"/>
<dbReference type="EnsemblBacteria" id="BAA17533">
    <property type="protein sequence ID" value="BAA17533"/>
    <property type="gene ID" value="BAA17533"/>
</dbReference>
<dbReference type="KEGG" id="syn:slr1238"/>
<dbReference type="eggNOG" id="COG0189">
    <property type="taxonomic scope" value="Bacteria"/>
</dbReference>
<dbReference type="InParanoid" id="P73493"/>
<dbReference type="PhylomeDB" id="P73493"/>
<dbReference type="BioCyc" id="MetaCyc:MONOMER-20776"/>
<dbReference type="BRENDA" id="6.3.2.3">
    <property type="organism ID" value="382"/>
</dbReference>
<dbReference type="UniPathway" id="UPA00142">
    <property type="reaction ID" value="UER00210"/>
</dbReference>
<dbReference type="Proteomes" id="UP000001425">
    <property type="component" value="Chromosome"/>
</dbReference>
<dbReference type="GO" id="GO:0005737">
    <property type="term" value="C:cytoplasm"/>
    <property type="evidence" value="ECO:0000318"/>
    <property type="project" value="GO_Central"/>
</dbReference>
<dbReference type="GO" id="GO:0005524">
    <property type="term" value="F:ATP binding"/>
    <property type="evidence" value="ECO:0007669"/>
    <property type="project" value="UniProtKB-UniRule"/>
</dbReference>
<dbReference type="GO" id="GO:0004363">
    <property type="term" value="F:glutathione synthase activity"/>
    <property type="evidence" value="ECO:0000318"/>
    <property type="project" value="GO_Central"/>
</dbReference>
<dbReference type="GO" id="GO:0046872">
    <property type="term" value="F:metal ion binding"/>
    <property type="evidence" value="ECO:0007669"/>
    <property type="project" value="UniProtKB-KW"/>
</dbReference>
<dbReference type="Gene3D" id="3.40.50.20">
    <property type="match status" value="1"/>
</dbReference>
<dbReference type="Gene3D" id="3.30.1490.20">
    <property type="entry name" value="ATP-grasp fold, A domain"/>
    <property type="match status" value="1"/>
</dbReference>
<dbReference type="Gene3D" id="3.30.470.20">
    <property type="entry name" value="ATP-grasp fold, B domain"/>
    <property type="match status" value="1"/>
</dbReference>
<dbReference type="HAMAP" id="MF_00162">
    <property type="entry name" value="GSH_S"/>
    <property type="match status" value="1"/>
</dbReference>
<dbReference type="InterPro" id="IPR011761">
    <property type="entry name" value="ATP-grasp"/>
</dbReference>
<dbReference type="InterPro" id="IPR013815">
    <property type="entry name" value="ATP_grasp_subdomain_1"/>
</dbReference>
<dbReference type="InterPro" id="IPR006284">
    <property type="entry name" value="Glut_synth_pro"/>
</dbReference>
<dbReference type="InterPro" id="IPR004218">
    <property type="entry name" value="GSHS_ATP-bd"/>
</dbReference>
<dbReference type="InterPro" id="IPR004215">
    <property type="entry name" value="GSHS_N"/>
</dbReference>
<dbReference type="InterPro" id="IPR016185">
    <property type="entry name" value="PreATP-grasp_dom_sf"/>
</dbReference>
<dbReference type="NCBIfam" id="TIGR01380">
    <property type="entry name" value="glut_syn"/>
    <property type="match status" value="1"/>
</dbReference>
<dbReference type="NCBIfam" id="NF003573">
    <property type="entry name" value="PRK05246.1"/>
    <property type="match status" value="1"/>
</dbReference>
<dbReference type="PANTHER" id="PTHR21621:SF4">
    <property type="entry name" value="GLUTATHIONE SYNTHETASE"/>
    <property type="match status" value="1"/>
</dbReference>
<dbReference type="PANTHER" id="PTHR21621">
    <property type="entry name" value="RIBOSOMAL PROTEIN S6 MODIFICATION PROTEIN"/>
    <property type="match status" value="1"/>
</dbReference>
<dbReference type="Pfam" id="PF02955">
    <property type="entry name" value="GSH-S_ATP"/>
    <property type="match status" value="1"/>
</dbReference>
<dbReference type="Pfam" id="PF02951">
    <property type="entry name" value="GSH-S_N"/>
    <property type="match status" value="1"/>
</dbReference>
<dbReference type="SUPFAM" id="SSF56059">
    <property type="entry name" value="Glutathione synthetase ATP-binding domain-like"/>
    <property type="match status" value="1"/>
</dbReference>
<dbReference type="SUPFAM" id="SSF52440">
    <property type="entry name" value="PreATP-grasp domain"/>
    <property type="match status" value="1"/>
</dbReference>
<dbReference type="PROSITE" id="PS50975">
    <property type="entry name" value="ATP_GRASP"/>
    <property type="match status" value="1"/>
</dbReference>
<sequence length="320" mass="35069">MKLAFIIDPLEKLDPGHDSTVAIMEAAQKLGHEVFVTSVGDLAVINGQAWAKLAAVRLQPVILVDGHWQVSQPWSELSKSQWMALTECQAVFMRKDPPVTVQYLYATFILELLAPTKTMVINSPQGLREANEKMYTLQFAAVMPPTVVSLDKGLIRQFLEEHGAAVLKPLGGKAGEGILFLDPGDRNFNSLVEISTQHGKEPVMVQRFLPEAKEGDKRIILLDGDPIGAVNRIPSGAEFRGNMAVGGQVAPTTITSREIEICALLKPKLQADGLYFVGIDVIGGYLTEVNVTSPTGIREIDRLEGVRLGEKVICWLEKQF</sequence>